<gene>
    <name evidence="1" type="primary">rpsO</name>
    <name type="ordered locus">PEPE_1146</name>
</gene>
<keyword id="KW-0687">Ribonucleoprotein</keyword>
<keyword id="KW-0689">Ribosomal protein</keyword>
<keyword id="KW-0694">RNA-binding</keyword>
<keyword id="KW-0699">rRNA-binding</keyword>
<sequence length="89" mass="10420">MAISQEKKNEIIAKYARHEGDTGSAEVQIAVLTADINEINEHLRVHRKDFHSQRGLMKKIGHRRNLLAYLRKTDVQRYRDLIKSLGLRR</sequence>
<comment type="function">
    <text evidence="1">One of the primary rRNA binding proteins, it binds directly to 16S rRNA where it helps nucleate assembly of the platform of the 30S subunit by binding and bridging several RNA helices of the 16S rRNA.</text>
</comment>
<comment type="function">
    <text evidence="1">Forms an intersubunit bridge (bridge B4) with the 23S rRNA of the 50S subunit in the ribosome.</text>
</comment>
<comment type="subunit">
    <text evidence="1">Part of the 30S ribosomal subunit. Forms a bridge to the 50S subunit in the 70S ribosome, contacting the 23S rRNA.</text>
</comment>
<comment type="similarity">
    <text evidence="1">Belongs to the universal ribosomal protein uS15 family.</text>
</comment>
<dbReference type="EMBL" id="CP000422">
    <property type="protein sequence ID" value="ABJ68200.1"/>
    <property type="molecule type" value="Genomic_DNA"/>
</dbReference>
<dbReference type="RefSeq" id="WP_002833449.1">
    <property type="nucleotide sequence ID" value="NC_008525.1"/>
</dbReference>
<dbReference type="SMR" id="Q03F22"/>
<dbReference type="STRING" id="278197.PEPE_1146"/>
<dbReference type="GeneID" id="33062402"/>
<dbReference type="KEGG" id="ppe:PEPE_1146"/>
<dbReference type="eggNOG" id="COG0184">
    <property type="taxonomic scope" value="Bacteria"/>
</dbReference>
<dbReference type="HOGENOM" id="CLU_148518_0_0_9"/>
<dbReference type="OrthoDB" id="9799262at2"/>
<dbReference type="Proteomes" id="UP000000773">
    <property type="component" value="Chromosome"/>
</dbReference>
<dbReference type="GO" id="GO:0022627">
    <property type="term" value="C:cytosolic small ribosomal subunit"/>
    <property type="evidence" value="ECO:0007669"/>
    <property type="project" value="TreeGrafter"/>
</dbReference>
<dbReference type="GO" id="GO:0019843">
    <property type="term" value="F:rRNA binding"/>
    <property type="evidence" value="ECO:0007669"/>
    <property type="project" value="UniProtKB-UniRule"/>
</dbReference>
<dbReference type="GO" id="GO:0003735">
    <property type="term" value="F:structural constituent of ribosome"/>
    <property type="evidence" value="ECO:0007669"/>
    <property type="project" value="InterPro"/>
</dbReference>
<dbReference type="GO" id="GO:0006412">
    <property type="term" value="P:translation"/>
    <property type="evidence" value="ECO:0007669"/>
    <property type="project" value="UniProtKB-UniRule"/>
</dbReference>
<dbReference type="CDD" id="cd00353">
    <property type="entry name" value="Ribosomal_S15p_S13e"/>
    <property type="match status" value="1"/>
</dbReference>
<dbReference type="FunFam" id="1.10.287.10:FF:000002">
    <property type="entry name" value="30S ribosomal protein S15"/>
    <property type="match status" value="1"/>
</dbReference>
<dbReference type="Gene3D" id="6.10.250.3130">
    <property type="match status" value="1"/>
</dbReference>
<dbReference type="Gene3D" id="1.10.287.10">
    <property type="entry name" value="S15/NS1, RNA-binding"/>
    <property type="match status" value="1"/>
</dbReference>
<dbReference type="HAMAP" id="MF_01343_B">
    <property type="entry name" value="Ribosomal_uS15_B"/>
    <property type="match status" value="1"/>
</dbReference>
<dbReference type="InterPro" id="IPR000589">
    <property type="entry name" value="Ribosomal_uS15"/>
</dbReference>
<dbReference type="InterPro" id="IPR005290">
    <property type="entry name" value="Ribosomal_uS15_bac-type"/>
</dbReference>
<dbReference type="InterPro" id="IPR009068">
    <property type="entry name" value="uS15_NS1_RNA-bd_sf"/>
</dbReference>
<dbReference type="NCBIfam" id="TIGR00952">
    <property type="entry name" value="S15_bact"/>
    <property type="match status" value="1"/>
</dbReference>
<dbReference type="PANTHER" id="PTHR23321">
    <property type="entry name" value="RIBOSOMAL PROTEIN S15, BACTERIAL AND ORGANELLAR"/>
    <property type="match status" value="1"/>
</dbReference>
<dbReference type="PANTHER" id="PTHR23321:SF26">
    <property type="entry name" value="SMALL RIBOSOMAL SUBUNIT PROTEIN US15M"/>
    <property type="match status" value="1"/>
</dbReference>
<dbReference type="Pfam" id="PF00312">
    <property type="entry name" value="Ribosomal_S15"/>
    <property type="match status" value="1"/>
</dbReference>
<dbReference type="SMART" id="SM01387">
    <property type="entry name" value="Ribosomal_S15"/>
    <property type="match status" value="1"/>
</dbReference>
<dbReference type="SUPFAM" id="SSF47060">
    <property type="entry name" value="S15/NS1 RNA-binding domain"/>
    <property type="match status" value="1"/>
</dbReference>
<dbReference type="PROSITE" id="PS00362">
    <property type="entry name" value="RIBOSOMAL_S15"/>
    <property type="match status" value="1"/>
</dbReference>
<accession>Q03F22</accession>
<evidence type="ECO:0000255" key="1">
    <source>
        <dbReference type="HAMAP-Rule" id="MF_01343"/>
    </source>
</evidence>
<evidence type="ECO:0000305" key="2"/>
<reference key="1">
    <citation type="journal article" date="2006" name="Proc. Natl. Acad. Sci. U.S.A.">
        <title>Comparative genomics of the lactic acid bacteria.</title>
        <authorList>
            <person name="Makarova K.S."/>
            <person name="Slesarev A."/>
            <person name="Wolf Y.I."/>
            <person name="Sorokin A."/>
            <person name="Mirkin B."/>
            <person name="Koonin E.V."/>
            <person name="Pavlov A."/>
            <person name="Pavlova N."/>
            <person name="Karamychev V."/>
            <person name="Polouchine N."/>
            <person name="Shakhova V."/>
            <person name="Grigoriev I."/>
            <person name="Lou Y."/>
            <person name="Rohksar D."/>
            <person name="Lucas S."/>
            <person name="Huang K."/>
            <person name="Goodstein D.M."/>
            <person name="Hawkins T."/>
            <person name="Plengvidhya V."/>
            <person name="Welker D."/>
            <person name="Hughes J."/>
            <person name="Goh Y."/>
            <person name="Benson A."/>
            <person name="Baldwin K."/>
            <person name="Lee J.-H."/>
            <person name="Diaz-Muniz I."/>
            <person name="Dosti B."/>
            <person name="Smeianov V."/>
            <person name="Wechter W."/>
            <person name="Barabote R."/>
            <person name="Lorca G."/>
            <person name="Altermann E."/>
            <person name="Barrangou R."/>
            <person name="Ganesan B."/>
            <person name="Xie Y."/>
            <person name="Rawsthorne H."/>
            <person name="Tamir D."/>
            <person name="Parker C."/>
            <person name="Breidt F."/>
            <person name="Broadbent J.R."/>
            <person name="Hutkins R."/>
            <person name="O'Sullivan D."/>
            <person name="Steele J."/>
            <person name="Unlu G."/>
            <person name="Saier M.H. Jr."/>
            <person name="Klaenhammer T."/>
            <person name="Richardson P."/>
            <person name="Kozyavkin S."/>
            <person name="Weimer B.C."/>
            <person name="Mills D.A."/>
        </authorList>
    </citation>
    <scope>NUCLEOTIDE SEQUENCE [LARGE SCALE GENOMIC DNA]</scope>
    <source>
        <strain>ATCC 25745 / CCUG 21536 / LMG 10740 / 183-1w</strain>
    </source>
</reference>
<protein>
    <recommendedName>
        <fullName evidence="1">Small ribosomal subunit protein uS15</fullName>
    </recommendedName>
    <alternativeName>
        <fullName evidence="2">30S ribosomal protein S15</fullName>
    </alternativeName>
</protein>
<name>RS15_PEDPA</name>
<feature type="chain" id="PRO_1000054834" description="Small ribosomal subunit protein uS15">
    <location>
        <begin position="1"/>
        <end position="89"/>
    </location>
</feature>
<proteinExistence type="inferred from homology"/>
<organism>
    <name type="scientific">Pediococcus pentosaceus (strain ATCC 25745 / CCUG 21536 / LMG 10740 / 183-1w)</name>
    <dbReference type="NCBI Taxonomy" id="278197"/>
    <lineage>
        <taxon>Bacteria</taxon>
        <taxon>Bacillati</taxon>
        <taxon>Bacillota</taxon>
        <taxon>Bacilli</taxon>
        <taxon>Lactobacillales</taxon>
        <taxon>Lactobacillaceae</taxon>
        <taxon>Pediococcus</taxon>
    </lineage>
</organism>